<comment type="function">
    <text evidence="4">Component of the ribosome, a large ribonucleoprotein complex responsible for the synthesis of proteins in the cell. The small ribosomal subunit (SSU) binds messenger RNAs (mRNAs) and translates the encoded message by selecting cognate aminoacyl-transfer RNA (tRNA) molecules. The large subunit (LSU) contains the ribosomal catalytic site termed the peptidyl transferase center (PTC), which catalyzes the formation of peptide bonds, thereby polymerizing the amino acids delivered by tRNAs into a polypeptide chain. The nascent polypeptides leave the ribosome through a tunnel in the LSU and interact with protein factors that function in enzymatic processing, targeting, and the membrane insertion of nascent chains at the exit of the ribosomal tunnel.</text>
</comment>
<comment type="subunit">
    <text evidence="1">Component of the large ribosomal subunit (PubMed:35613268). Mature ribosomes consist of a small (40S) and a large (60S) subunit (PubMed:35613268). The 40S subunit contains about 32 different proteins and 1 molecule of RNA (18S) (PubMed:35613268). The 60S subunit contains 45 different proteins and 3 molecules of RNA (25S, 5.8S and 5S) (PubMed:35613268).</text>
</comment>
<comment type="subcellular location">
    <subcellularLocation>
        <location evidence="4">Cytoplasm</location>
    </subcellularLocation>
</comment>
<comment type="similarity">
    <text evidence="3">Belongs to the universal ribosomal protein uL24 family.</text>
</comment>
<protein>
    <recommendedName>
        <fullName evidence="2">Large ribosomal subunit protein uL24</fullName>
    </recommendedName>
    <alternativeName>
        <fullName>60S ribosomal protein L26-B</fullName>
    </alternativeName>
</protein>
<feature type="chain" id="PRO_0000456511" description="Large ribosomal subunit protein uL24">
    <location>
        <begin position="1"/>
        <end position="127"/>
    </location>
</feature>
<name>RL26B_CANAL</name>
<keyword id="KW-0002">3D-structure</keyword>
<keyword id="KW-0963">Cytoplasm</keyword>
<keyword id="KW-1185">Reference proteome</keyword>
<keyword id="KW-0687">Ribonucleoprotein</keyword>
<keyword id="KW-0689">Ribosomal protein</keyword>
<reference key="1">
    <citation type="journal article" date="2004" name="Proc. Natl. Acad. Sci. U.S.A.">
        <title>The diploid genome sequence of Candida albicans.</title>
        <authorList>
            <person name="Jones T."/>
            <person name="Federspiel N.A."/>
            <person name="Chibana H."/>
            <person name="Dungan J."/>
            <person name="Kalman S."/>
            <person name="Magee B.B."/>
            <person name="Newport G."/>
            <person name="Thorstenson Y.R."/>
            <person name="Agabian N."/>
            <person name="Magee P.T."/>
            <person name="Davis R.W."/>
            <person name="Scherer S."/>
        </authorList>
    </citation>
    <scope>NUCLEOTIDE SEQUENCE [LARGE SCALE GENOMIC DNA]</scope>
    <source>
        <strain>SC5314 / ATCC MYA-2876</strain>
    </source>
</reference>
<reference key="2">
    <citation type="journal article" date="2007" name="Genome Biol.">
        <title>Assembly of the Candida albicans genome into sixteen supercontigs aligned on the eight chromosomes.</title>
        <authorList>
            <person name="van het Hoog M."/>
            <person name="Rast T.J."/>
            <person name="Martchenko M."/>
            <person name="Grindle S."/>
            <person name="Dignard D."/>
            <person name="Hogues H."/>
            <person name="Cuomo C."/>
            <person name="Berriman M."/>
            <person name="Scherer S."/>
            <person name="Magee B.B."/>
            <person name="Whiteway M."/>
            <person name="Chibana H."/>
            <person name="Nantel A."/>
            <person name="Magee P.T."/>
        </authorList>
    </citation>
    <scope>GENOME REANNOTATION</scope>
    <source>
        <strain>SC5314 / ATCC MYA-2876</strain>
    </source>
</reference>
<reference key="3">
    <citation type="journal article" date="2013" name="Genome Biol.">
        <title>Assembly of a phased diploid Candida albicans genome facilitates allele-specific measurements and provides a simple model for repeat and indel structure.</title>
        <authorList>
            <person name="Muzzey D."/>
            <person name="Schwartz K."/>
            <person name="Weissman J.S."/>
            <person name="Sherlock G."/>
        </authorList>
    </citation>
    <scope>NUCLEOTIDE SEQUENCE [LARGE SCALE GENOMIC DNA]</scope>
    <scope>GENOME REANNOTATION</scope>
    <source>
        <strain>SC5314 / ATCC MYA-2876</strain>
    </source>
</reference>
<reference evidence="5 6 7" key="4">
    <citation type="journal article" date="2022" name="Sci. Adv.">
        <title>E-site drug specificity of the human pathogen Candida albicans ribosome.</title>
        <authorList>
            <person name="Zgadzay Y."/>
            <person name="Kolosova O."/>
            <person name="Stetsenko A."/>
            <person name="Wu C."/>
            <person name="Bruchlen D."/>
            <person name="Usachev K."/>
            <person name="Validov S."/>
            <person name="Jenner L."/>
            <person name="Rogachev A."/>
            <person name="Yusupova G."/>
            <person name="Sachs M.S."/>
            <person name="Guskov A."/>
            <person name="Yusupov M."/>
        </authorList>
    </citation>
    <scope>STRUCTURE BY ELECTRON MICROSCOPY (2.32 ANGSTROMS) OF THE 80S RIBOSOME</scope>
    <scope>SUBUNIT</scope>
</reference>
<dbReference type="EMBL" id="CP017623">
    <property type="protein sequence ID" value="AOW25918.1"/>
    <property type="molecule type" value="Genomic_DNA"/>
</dbReference>
<dbReference type="RefSeq" id="XP_019330618.1">
    <property type="nucleotide sequence ID" value="XM_019475073.1"/>
</dbReference>
<dbReference type="PDB" id="7PZY">
    <property type="method" value="EM"/>
    <property type="resolution" value="2.32 A"/>
    <property type="chains" value="9=1-127"/>
</dbReference>
<dbReference type="PDB" id="7Q08">
    <property type="method" value="EM"/>
    <property type="resolution" value="2.56 A"/>
    <property type="chains" value="9=1-127"/>
</dbReference>
<dbReference type="PDB" id="7Q0F">
    <property type="method" value="EM"/>
    <property type="resolution" value="2.64 A"/>
    <property type="chains" value="9=1-127"/>
</dbReference>
<dbReference type="PDB" id="7Q0P">
    <property type="method" value="EM"/>
    <property type="resolution" value="2.77 A"/>
    <property type="chains" value="9=1-127"/>
</dbReference>
<dbReference type="PDB" id="7Q0R">
    <property type="method" value="EM"/>
    <property type="resolution" value="2.67 A"/>
    <property type="chains" value="9=1-127"/>
</dbReference>
<dbReference type="PDB" id="8C3A">
    <property type="method" value="X-ray"/>
    <property type="resolution" value="3.00 A"/>
    <property type="chains" value="9/BT=1-127"/>
</dbReference>
<dbReference type="PDB" id="8OGJ">
    <property type="method" value="EM"/>
    <property type="resolution" value="3.10 A"/>
    <property type="chains" value="9=1-127"/>
</dbReference>
<dbReference type="PDB" id="8OH6">
    <property type="method" value="X-ray"/>
    <property type="resolution" value="3.35 A"/>
    <property type="chains" value="9/BT=1-127"/>
</dbReference>
<dbReference type="PDB" id="8OI5">
    <property type="method" value="X-ray"/>
    <property type="resolution" value="2.90 A"/>
    <property type="chains" value="9/BT=1-127"/>
</dbReference>
<dbReference type="PDB" id="8OJ3">
    <property type="method" value="X-ray"/>
    <property type="resolution" value="3.50 A"/>
    <property type="chains" value="9/BT=1-127"/>
</dbReference>
<dbReference type="PDBsum" id="7PZY"/>
<dbReference type="PDBsum" id="7Q08"/>
<dbReference type="PDBsum" id="7Q0F"/>
<dbReference type="PDBsum" id="7Q0P"/>
<dbReference type="PDBsum" id="7Q0R"/>
<dbReference type="PDBsum" id="8C3A"/>
<dbReference type="PDBsum" id="8OGJ"/>
<dbReference type="PDBsum" id="8OH6"/>
<dbReference type="PDBsum" id="8OI5"/>
<dbReference type="PDBsum" id="8OJ3"/>
<dbReference type="SMR" id="A0A1D8PCQ5"/>
<dbReference type="FunCoup" id="A0A1D8PCQ5">
    <property type="interactions" value="953"/>
</dbReference>
<dbReference type="STRING" id="237561.A0A1D8PCQ5"/>
<dbReference type="EnsemblFungi" id="C1_02330C_A-T">
    <property type="protein sequence ID" value="C1_02330C_A-T-p1"/>
    <property type="gene ID" value="C1_02330C_A"/>
</dbReference>
<dbReference type="GeneID" id="30514969"/>
<dbReference type="KEGG" id="cal:CAALFM_C102330CA"/>
<dbReference type="CGD" id="CAL0000201086">
    <property type="gene designation" value="orf19.3690.2"/>
</dbReference>
<dbReference type="VEuPathDB" id="FungiDB:C1_02330C_A"/>
<dbReference type="eggNOG" id="KOG3401">
    <property type="taxonomic scope" value="Eukaryota"/>
</dbReference>
<dbReference type="InParanoid" id="A0A1D8PCQ5"/>
<dbReference type="OMA" id="VRIMRGD"/>
<dbReference type="OrthoDB" id="1688503at2759"/>
<dbReference type="Proteomes" id="UP000000559">
    <property type="component" value="Chromosome 1"/>
</dbReference>
<dbReference type="GO" id="GO:0022625">
    <property type="term" value="C:cytosolic large ribosomal subunit"/>
    <property type="evidence" value="ECO:0000318"/>
    <property type="project" value="GO_Central"/>
</dbReference>
<dbReference type="GO" id="GO:0030684">
    <property type="term" value="C:preribosome"/>
    <property type="evidence" value="ECO:0007669"/>
    <property type="project" value="EnsemblFungi"/>
</dbReference>
<dbReference type="GO" id="GO:0030445">
    <property type="term" value="C:yeast-form cell wall"/>
    <property type="evidence" value="ECO:0000314"/>
    <property type="project" value="CGD"/>
</dbReference>
<dbReference type="GO" id="GO:0003723">
    <property type="term" value="F:RNA binding"/>
    <property type="evidence" value="ECO:0000318"/>
    <property type="project" value="GO_Central"/>
</dbReference>
<dbReference type="GO" id="GO:0003735">
    <property type="term" value="F:structural constituent of ribosome"/>
    <property type="evidence" value="ECO:0000318"/>
    <property type="project" value="GO_Central"/>
</dbReference>
<dbReference type="GO" id="GO:0002181">
    <property type="term" value="P:cytoplasmic translation"/>
    <property type="evidence" value="ECO:0000318"/>
    <property type="project" value="GO_Central"/>
</dbReference>
<dbReference type="GO" id="GO:0042273">
    <property type="term" value="P:ribosomal large subunit biogenesis"/>
    <property type="evidence" value="ECO:0000318"/>
    <property type="project" value="GO_Central"/>
</dbReference>
<dbReference type="CDD" id="cd06089">
    <property type="entry name" value="KOW_RPL26"/>
    <property type="match status" value="1"/>
</dbReference>
<dbReference type="FunFam" id="2.30.30.30:FF:000009">
    <property type="entry name" value="60S ribosomal protein L26"/>
    <property type="match status" value="1"/>
</dbReference>
<dbReference type="Gene3D" id="2.30.30.30">
    <property type="match status" value="1"/>
</dbReference>
<dbReference type="InterPro" id="IPR014722">
    <property type="entry name" value="Rib_uL2_dom2"/>
</dbReference>
<dbReference type="InterPro" id="IPR005825">
    <property type="entry name" value="Ribosomal_uL24_CS"/>
</dbReference>
<dbReference type="InterPro" id="IPR005756">
    <property type="entry name" value="Ribosomal_uL24_euk/arc"/>
</dbReference>
<dbReference type="InterPro" id="IPR041988">
    <property type="entry name" value="Ribosomal_uL24_KOW"/>
</dbReference>
<dbReference type="InterPro" id="IPR008991">
    <property type="entry name" value="Translation_prot_SH3-like_sf"/>
</dbReference>
<dbReference type="NCBIfam" id="TIGR01080">
    <property type="entry name" value="rplX_A_E"/>
    <property type="match status" value="1"/>
</dbReference>
<dbReference type="PANTHER" id="PTHR11143">
    <property type="entry name" value="60S RIBOSOMAL PROTEIN L26 FAMILY MEMBER"/>
    <property type="match status" value="1"/>
</dbReference>
<dbReference type="Pfam" id="PF16906">
    <property type="entry name" value="Ribosomal_L26"/>
    <property type="match status" value="1"/>
</dbReference>
<dbReference type="SUPFAM" id="SSF50104">
    <property type="entry name" value="Translation proteins SH3-like domain"/>
    <property type="match status" value="1"/>
</dbReference>
<dbReference type="PROSITE" id="PS01108">
    <property type="entry name" value="RIBOSOMAL_L24"/>
    <property type="match status" value="1"/>
</dbReference>
<proteinExistence type="evidence at protein level"/>
<accession>A0A1D8PCQ5</accession>
<organism>
    <name type="scientific">Candida albicans (strain SC5314 / ATCC MYA-2876)</name>
    <name type="common">Yeast</name>
    <dbReference type="NCBI Taxonomy" id="237561"/>
    <lineage>
        <taxon>Eukaryota</taxon>
        <taxon>Fungi</taxon>
        <taxon>Dikarya</taxon>
        <taxon>Ascomycota</taxon>
        <taxon>Saccharomycotina</taxon>
        <taxon>Pichiomycetes</taxon>
        <taxon>Debaryomycetaceae</taxon>
        <taxon>Candida/Lodderomyces clade</taxon>
        <taxon>Candida</taxon>
    </lineage>
</organism>
<evidence type="ECO:0000269" key="1">
    <source>
    </source>
</evidence>
<evidence type="ECO:0000303" key="2">
    <source>
    </source>
</evidence>
<evidence type="ECO:0000305" key="3"/>
<evidence type="ECO:0000305" key="4">
    <source>
    </source>
</evidence>
<evidence type="ECO:0007744" key="5">
    <source>
        <dbReference type="PDB" id="7PZY"/>
    </source>
</evidence>
<evidence type="ECO:0007744" key="6">
    <source>
        <dbReference type="PDB" id="7Q0F"/>
    </source>
</evidence>
<evidence type="ECO:0007744" key="7">
    <source>
        <dbReference type="PDB" id="7Q0P"/>
    </source>
</evidence>
<sequence length="127" mass="14185">MAKISQDVSSSRSKARKAYFTASSVERRVLLSAPLSKELRQQYNVKSLPIRQNDEVLVVRGSKKGSEGKVNSVYRLKFAIQVDKLQKEKSNGASVPINIHPSKVVITKLHLDKDRKALIQRKGGKAE</sequence>
<gene>
    <name evidence="2" type="primary">RPL26B</name>
    <name type="ordered locus">orf19.3690.2</name>
    <name type="ORF">CAALFM_C102330CA</name>
</gene>